<accession>Q1BRB1</accession>
<comment type="function">
    <text evidence="1">Produces ATP from ADP in the presence of a proton gradient across the membrane.</text>
</comment>
<comment type="subunit">
    <text>F-type ATPases have 2 components, CF(1) - the catalytic core - and CF(0) - the membrane proton channel. CF(1) has five subunits: alpha(3), beta(3), gamma(1), delta(1), epsilon(1). CF(0) has three main subunits: a, b and c.</text>
</comment>
<comment type="subcellular location">
    <subcellularLocation>
        <location evidence="1">Cell inner membrane</location>
        <topology evidence="1">Peripheral membrane protein</topology>
    </subcellularLocation>
</comment>
<comment type="similarity">
    <text evidence="1">Belongs to the ATPase epsilon chain family.</text>
</comment>
<name>ATPE1_BURO1</name>
<protein>
    <recommendedName>
        <fullName evidence="1">ATP synthase epsilon chain 1</fullName>
    </recommendedName>
    <alternativeName>
        <fullName evidence="1">ATP synthase F1 sector epsilon subunit 1</fullName>
    </alternativeName>
    <alternativeName>
        <fullName evidence="1">F-ATPase epsilon subunit 1</fullName>
    </alternativeName>
</protein>
<evidence type="ECO:0000255" key="1">
    <source>
        <dbReference type="HAMAP-Rule" id="MF_00530"/>
    </source>
</evidence>
<proteinExistence type="inferred from homology"/>
<keyword id="KW-0066">ATP synthesis</keyword>
<keyword id="KW-0997">Cell inner membrane</keyword>
<keyword id="KW-1003">Cell membrane</keyword>
<keyword id="KW-0139">CF(1)</keyword>
<keyword id="KW-0375">Hydrogen ion transport</keyword>
<keyword id="KW-0406">Ion transport</keyword>
<keyword id="KW-0472">Membrane</keyword>
<keyword id="KW-0813">Transport</keyword>
<sequence length="141" mass="14985">MATIKVDVVSAEEQIFSGEAKFVALPGETGELGILPGHTPLITRIRPGAVRIEVEGGNDEFVFVAGGILEVQPGAVTVLADTAIRGKDLDAAKAEEARKRAEETLQNAKSDLDLAKAQSELATAMAQLEAIQRLAKIRSRH</sequence>
<feature type="chain" id="PRO_0000265791" description="ATP synthase epsilon chain 1">
    <location>
        <begin position="1"/>
        <end position="141"/>
    </location>
</feature>
<dbReference type="EMBL" id="CP000378">
    <property type="protein sequence ID" value="ABF77844.1"/>
    <property type="molecule type" value="Genomic_DNA"/>
</dbReference>
<dbReference type="SMR" id="Q1BRB1"/>
<dbReference type="HOGENOM" id="CLU_084338_2_0_4"/>
<dbReference type="GO" id="GO:0005886">
    <property type="term" value="C:plasma membrane"/>
    <property type="evidence" value="ECO:0007669"/>
    <property type="project" value="UniProtKB-SubCell"/>
</dbReference>
<dbReference type="GO" id="GO:0045259">
    <property type="term" value="C:proton-transporting ATP synthase complex"/>
    <property type="evidence" value="ECO:0007669"/>
    <property type="project" value="UniProtKB-KW"/>
</dbReference>
<dbReference type="GO" id="GO:0005524">
    <property type="term" value="F:ATP binding"/>
    <property type="evidence" value="ECO:0007669"/>
    <property type="project" value="UniProtKB-UniRule"/>
</dbReference>
<dbReference type="GO" id="GO:0046933">
    <property type="term" value="F:proton-transporting ATP synthase activity, rotational mechanism"/>
    <property type="evidence" value="ECO:0007669"/>
    <property type="project" value="UniProtKB-UniRule"/>
</dbReference>
<dbReference type="CDD" id="cd12152">
    <property type="entry name" value="F1-ATPase_delta"/>
    <property type="match status" value="1"/>
</dbReference>
<dbReference type="FunFam" id="2.60.15.10:FF:000001">
    <property type="entry name" value="ATP synthase epsilon chain"/>
    <property type="match status" value="1"/>
</dbReference>
<dbReference type="Gene3D" id="1.20.5.440">
    <property type="entry name" value="ATP synthase delta/epsilon subunit, C-terminal domain"/>
    <property type="match status" value="1"/>
</dbReference>
<dbReference type="Gene3D" id="2.60.15.10">
    <property type="entry name" value="F0F1 ATP synthase delta/epsilon subunit, N-terminal"/>
    <property type="match status" value="1"/>
</dbReference>
<dbReference type="HAMAP" id="MF_00530">
    <property type="entry name" value="ATP_synth_epsil_bac"/>
    <property type="match status" value="1"/>
</dbReference>
<dbReference type="InterPro" id="IPR036794">
    <property type="entry name" value="ATP_F1_dsu/esu_C_sf"/>
</dbReference>
<dbReference type="InterPro" id="IPR001469">
    <property type="entry name" value="ATP_synth_F1_dsu/esu"/>
</dbReference>
<dbReference type="InterPro" id="IPR020546">
    <property type="entry name" value="ATP_synth_F1_dsu/esu_N"/>
</dbReference>
<dbReference type="InterPro" id="IPR020547">
    <property type="entry name" value="ATP_synth_F1_esu_C"/>
</dbReference>
<dbReference type="InterPro" id="IPR036771">
    <property type="entry name" value="ATPsynth_dsu/esu_N"/>
</dbReference>
<dbReference type="NCBIfam" id="TIGR01216">
    <property type="entry name" value="ATP_synt_epsi"/>
    <property type="match status" value="1"/>
</dbReference>
<dbReference type="NCBIfam" id="NF001847">
    <property type="entry name" value="PRK00571.1-4"/>
    <property type="match status" value="1"/>
</dbReference>
<dbReference type="PANTHER" id="PTHR13822">
    <property type="entry name" value="ATP SYNTHASE DELTA/EPSILON CHAIN"/>
    <property type="match status" value="1"/>
</dbReference>
<dbReference type="PANTHER" id="PTHR13822:SF10">
    <property type="entry name" value="ATP SYNTHASE EPSILON CHAIN, CHLOROPLASTIC"/>
    <property type="match status" value="1"/>
</dbReference>
<dbReference type="Pfam" id="PF00401">
    <property type="entry name" value="ATP-synt_DE"/>
    <property type="match status" value="1"/>
</dbReference>
<dbReference type="Pfam" id="PF02823">
    <property type="entry name" value="ATP-synt_DE_N"/>
    <property type="match status" value="1"/>
</dbReference>
<dbReference type="SUPFAM" id="SSF46604">
    <property type="entry name" value="Epsilon subunit of F1F0-ATP synthase C-terminal domain"/>
    <property type="match status" value="1"/>
</dbReference>
<dbReference type="SUPFAM" id="SSF51344">
    <property type="entry name" value="Epsilon subunit of F1F0-ATP synthase N-terminal domain"/>
    <property type="match status" value="1"/>
</dbReference>
<organism>
    <name type="scientific">Burkholderia orbicola (strain AU 1054)</name>
    <dbReference type="NCBI Taxonomy" id="331271"/>
    <lineage>
        <taxon>Bacteria</taxon>
        <taxon>Pseudomonadati</taxon>
        <taxon>Pseudomonadota</taxon>
        <taxon>Betaproteobacteria</taxon>
        <taxon>Burkholderiales</taxon>
        <taxon>Burkholderiaceae</taxon>
        <taxon>Burkholderia</taxon>
        <taxon>Burkholderia cepacia complex</taxon>
        <taxon>Burkholderia orbicola</taxon>
    </lineage>
</organism>
<reference key="1">
    <citation type="submission" date="2006-05" db="EMBL/GenBank/DDBJ databases">
        <title>Complete sequence of chromosome 1 of Burkholderia cenocepacia AU 1054.</title>
        <authorList>
            <consortium name="US DOE Joint Genome Institute"/>
            <person name="Copeland A."/>
            <person name="Lucas S."/>
            <person name="Lapidus A."/>
            <person name="Barry K."/>
            <person name="Detter J.C."/>
            <person name="Glavina del Rio T."/>
            <person name="Hammon N."/>
            <person name="Israni S."/>
            <person name="Dalin E."/>
            <person name="Tice H."/>
            <person name="Pitluck S."/>
            <person name="Chain P."/>
            <person name="Malfatti S."/>
            <person name="Shin M."/>
            <person name="Vergez L."/>
            <person name="Schmutz J."/>
            <person name="Larimer F."/>
            <person name="Land M."/>
            <person name="Hauser L."/>
            <person name="Kyrpides N."/>
            <person name="Lykidis A."/>
            <person name="LiPuma J.J."/>
            <person name="Konstantinidis K."/>
            <person name="Tiedje J.M."/>
            <person name="Richardson P."/>
        </authorList>
    </citation>
    <scope>NUCLEOTIDE SEQUENCE [LARGE SCALE GENOMIC DNA]</scope>
    <source>
        <strain>AU 1054</strain>
    </source>
</reference>
<gene>
    <name evidence="1" type="primary">atpC1</name>
    <name type="ordered locus">Bcen_2948</name>
</gene>